<feature type="chain" id="PRO_1000007788" description="5'-nucleotidase SurE">
    <location>
        <begin position="1"/>
        <end position="248"/>
    </location>
</feature>
<feature type="binding site" evidence="1">
    <location>
        <position position="8"/>
    </location>
    <ligand>
        <name>a divalent metal cation</name>
        <dbReference type="ChEBI" id="CHEBI:60240"/>
    </ligand>
</feature>
<feature type="binding site" evidence="1">
    <location>
        <position position="9"/>
    </location>
    <ligand>
        <name>a divalent metal cation</name>
        <dbReference type="ChEBI" id="CHEBI:60240"/>
    </ligand>
</feature>
<feature type="binding site" evidence="1">
    <location>
        <position position="39"/>
    </location>
    <ligand>
        <name>a divalent metal cation</name>
        <dbReference type="ChEBI" id="CHEBI:60240"/>
    </ligand>
</feature>
<feature type="binding site" evidence="1">
    <location>
        <position position="91"/>
    </location>
    <ligand>
        <name>a divalent metal cation</name>
        <dbReference type="ChEBI" id="CHEBI:60240"/>
    </ligand>
</feature>
<proteinExistence type="inferred from homology"/>
<dbReference type="EC" id="3.1.3.5" evidence="1"/>
<dbReference type="EMBL" id="CP000507">
    <property type="protein sequence ID" value="ABL99248.1"/>
    <property type="molecule type" value="Genomic_DNA"/>
</dbReference>
<dbReference type="RefSeq" id="WP_011759157.1">
    <property type="nucleotide sequence ID" value="NC_008700.1"/>
</dbReference>
<dbReference type="SMR" id="A1S4E2"/>
<dbReference type="STRING" id="326297.Sama_1041"/>
<dbReference type="KEGG" id="saz:Sama_1041"/>
<dbReference type="eggNOG" id="COG0496">
    <property type="taxonomic scope" value="Bacteria"/>
</dbReference>
<dbReference type="HOGENOM" id="CLU_045192_1_2_6"/>
<dbReference type="OrthoDB" id="9780815at2"/>
<dbReference type="Proteomes" id="UP000009175">
    <property type="component" value="Chromosome"/>
</dbReference>
<dbReference type="GO" id="GO:0005737">
    <property type="term" value="C:cytoplasm"/>
    <property type="evidence" value="ECO:0007669"/>
    <property type="project" value="UniProtKB-SubCell"/>
</dbReference>
<dbReference type="GO" id="GO:0008254">
    <property type="term" value="F:3'-nucleotidase activity"/>
    <property type="evidence" value="ECO:0007669"/>
    <property type="project" value="TreeGrafter"/>
</dbReference>
<dbReference type="GO" id="GO:0008253">
    <property type="term" value="F:5'-nucleotidase activity"/>
    <property type="evidence" value="ECO:0007669"/>
    <property type="project" value="UniProtKB-UniRule"/>
</dbReference>
<dbReference type="GO" id="GO:0004309">
    <property type="term" value="F:exopolyphosphatase activity"/>
    <property type="evidence" value="ECO:0007669"/>
    <property type="project" value="TreeGrafter"/>
</dbReference>
<dbReference type="GO" id="GO:0046872">
    <property type="term" value="F:metal ion binding"/>
    <property type="evidence" value="ECO:0007669"/>
    <property type="project" value="UniProtKB-UniRule"/>
</dbReference>
<dbReference type="GO" id="GO:0000166">
    <property type="term" value="F:nucleotide binding"/>
    <property type="evidence" value="ECO:0007669"/>
    <property type="project" value="UniProtKB-KW"/>
</dbReference>
<dbReference type="FunFam" id="3.40.1210.10:FF:000001">
    <property type="entry name" value="5'/3'-nucleotidase SurE"/>
    <property type="match status" value="1"/>
</dbReference>
<dbReference type="Gene3D" id="3.40.1210.10">
    <property type="entry name" value="Survival protein SurE-like phosphatase/nucleotidase"/>
    <property type="match status" value="1"/>
</dbReference>
<dbReference type="HAMAP" id="MF_00060">
    <property type="entry name" value="SurE"/>
    <property type="match status" value="1"/>
</dbReference>
<dbReference type="InterPro" id="IPR030048">
    <property type="entry name" value="SurE"/>
</dbReference>
<dbReference type="InterPro" id="IPR002828">
    <property type="entry name" value="SurE-like_Pase/nucleotidase"/>
</dbReference>
<dbReference type="InterPro" id="IPR036523">
    <property type="entry name" value="SurE-like_sf"/>
</dbReference>
<dbReference type="NCBIfam" id="NF001489">
    <property type="entry name" value="PRK00346.1-3"/>
    <property type="match status" value="1"/>
</dbReference>
<dbReference type="NCBIfam" id="NF001490">
    <property type="entry name" value="PRK00346.1-4"/>
    <property type="match status" value="1"/>
</dbReference>
<dbReference type="NCBIfam" id="TIGR00087">
    <property type="entry name" value="surE"/>
    <property type="match status" value="1"/>
</dbReference>
<dbReference type="PANTHER" id="PTHR30457">
    <property type="entry name" value="5'-NUCLEOTIDASE SURE"/>
    <property type="match status" value="1"/>
</dbReference>
<dbReference type="PANTHER" id="PTHR30457:SF12">
    <property type="entry name" value="5'_3'-NUCLEOTIDASE SURE"/>
    <property type="match status" value="1"/>
</dbReference>
<dbReference type="Pfam" id="PF01975">
    <property type="entry name" value="SurE"/>
    <property type="match status" value="1"/>
</dbReference>
<dbReference type="SUPFAM" id="SSF64167">
    <property type="entry name" value="SurE-like"/>
    <property type="match status" value="1"/>
</dbReference>
<organism>
    <name type="scientific">Shewanella amazonensis (strain ATCC BAA-1098 / SB2B)</name>
    <dbReference type="NCBI Taxonomy" id="326297"/>
    <lineage>
        <taxon>Bacteria</taxon>
        <taxon>Pseudomonadati</taxon>
        <taxon>Pseudomonadota</taxon>
        <taxon>Gammaproteobacteria</taxon>
        <taxon>Alteromonadales</taxon>
        <taxon>Shewanellaceae</taxon>
        <taxon>Shewanella</taxon>
    </lineage>
</organism>
<keyword id="KW-0963">Cytoplasm</keyword>
<keyword id="KW-0378">Hydrolase</keyword>
<keyword id="KW-0479">Metal-binding</keyword>
<keyword id="KW-0547">Nucleotide-binding</keyword>
<keyword id="KW-1185">Reference proteome</keyword>
<accession>A1S4E2</accession>
<protein>
    <recommendedName>
        <fullName evidence="1">5'-nucleotidase SurE</fullName>
        <ecNumber evidence="1">3.1.3.5</ecNumber>
    </recommendedName>
    <alternativeName>
        <fullName evidence="1">Nucleoside 5'-monophosphate phosphohydrolase</fullName>
    </alternativeName>
</protein>
<evidence type="ECO:0000255" key="1">
    <source>
        <dbReference type="HAMAP-Rule" id="MF_00060"/>
    </source>
</evidence>
<comment type="function">
    <text evidence="1">Nucleotidase that shows phosphatase activity on nucleoside 5'-monophosphates.</text>
</comment>
<comment type="catalytic activity">
    <reaction evidence="1">
        <text>a ribonucleoside 5'-phosphate + H2O = a ribonucleoside + phosphate</text>
        <dbReference type="Rhea" id="RHEA:12484"/>
        <dbReference type="ChEBI" id="CHEBI:15377"/>
        <dbReference type="ChEBI" id="CHEBI:18254"/>
        <dbReference type="ChEBI" id="CHEBI:43474"/>
        <dbReference type="ChEBI" id="CHEBI:58043"/>
        <dbReference type="EC" id="3.1.3.5"/>
    </reaction>
</comment>
<comment type="cofactor">
    <cofactor evidence="1">
        <name>a divalent metal cation</name>
        <dbReference type="ChEBI" id="CHEBI:60240"/>
    </cofactor>
    <text evidence="1">Binds 1 divalent metal cation per subunit.</text>
</comment>
<comment type="subcellular location">
    <subcellularLocation>
        <location evidence="1">Cytoplasm</location>
    </subcellularLocation>
</comment>
<comment type="similarity">
    <text evidence="1">Belongs to the SurE nucleotidase family.</text>
</comment>
<name>SURE_SHEAM</name>
<reference key="1">
    <citation type="submission" date="2006-12" db="EMBL/GenBank/DDBJ databases">
        <title>Complete sequence of Shewanella amazonensis SB2B.</title>
        <authorList>
            <consortium name="US DOE Joint Genome Institute"/>
            <person name="Copeland A."/>
            <person name="Lucas S."/>
            <person name="Lapidus A."/>
            <person name="Barry K."/>
            <person name="Detter J.C."/>
            <person name="Glavina del Rio T."/>
            <person name="Hammon N."/>
            <person name="Israni S."/>
            <person name="Dalin E."/>
            <person name="Tice H."/>
            <person name="Pitluck S."/>
            <person name="Munk A.C."/>
            <person name="Brettin T."/>
            <person name="Bruce D."/>
            <person name="Han C."/>
            <person name="Tapia R."/>
            <person name="Gilna P."/>
            <person name="Schmutz J."/>
            <person name="Larimer F."/>
            <person name="Land M."/>
            <person name="Hauser L."/>
            <person name="Kyrpides N."/>
            <person name="Mikhailova N."/>
            <person name="Fredrickson J."/>
            <person name="Richardson P."/>
        </authorList>
    </citation>
    <scope>NUCLEOTIDE SEQUENCE [LARGE SCALE GENOMIC DNA]</scope>
    <source>
        <strain>ATCC BAA-1098 / SB2B</strain>
    </source>
</reference>
<sequence length="248" mass="26214">MRLLVSNDDGVYAPGIKALAEALKTIAHVDVVAPDRNCSAASNSLTLTNPLRINRLDNGYIAVNGTPSDCVHIAIREICTEEPELVVSGINAGANMGDDTLYSGTVAAAMEGRFQGLPAIAVSLSARTPVHYDAAAQIALRIVEGLKAHPLPADQILNVNVPDLPLEEIKGIKVTRLGARHRAEGVVRTTDPAGREIFWLGPPGEELDASEGTDFGAVAEGYVSITPLTVDLTAHSQLNALANWIEKI</sequence>
<gene>
    <name evidence="1" type="primary">surE</name>
    <name type="ordered locus">Sama_1041</name>
</gene>